<organism>
    <name type="scientific">Cryptococcus neoformans var. neoformans serotype D (strain B-3501A)</name>
    <name type="common">Filobasidiella neoformans</name>
    <dbReference type="NCBI Taxonomy" id="283643"/>
    <lineage>
        <taxon>Eukaryota</taxon>
        <taxon>Fungi</taxon>
        <taxon>Dikarya</taxon>
        <taxon>Basidiomycota</taxon>
        <taxon>Agaricomycotina</taxon>
        <taxon>Tremellomycetes</taxon>
        <taxon>Tremellales</taxon>
        <taxon>Cryptococcaceae</taxon>
        <taxon>Cryptococcus</taxon>
        <taxon>Cryptococcus neoformans species complex</taxon>
    </lineage>
</organism>
<feature type="propeptide" id="PRO_0000410031" evidence="2">
    <location>
        <begin position="1"/>
        <end status="unknown"/>
    </location>
</feature>
<feature type="chain" id="PRO_0000410032" description="Metacaspase-1">
    <location>
        <begin status="unknown"/>
        <end position="463"/>
    </location>
</feature>
<feature type="region of interest" description="Disordered" evidence="3">
    <location>
        <begin position="1"/>
        <end position="149"/>
    </location>
</feature>
<feature type="compositionally biased region" description="Gly residues" evidence="3">
    <location>
        <begin position="7"/>
        <end position="18"/>
    </location>
</feature>
<feature type="compositionally biased region" description="Pro residues" evidence="3">
    <location>
        <begin position="20"/>
        <end position="56"/>
    </location>
</feature>
<feature type="compositionally biased region" description="Low complexity" evidence="3">
    <location>
        <begin position="57"/>
        <end position="83"/>
    </location>
</feature>
<feature type="active site" evidence="1">
    <location>
        <position position="247"/>
    </location>
</feature>
<feature type="active site" evidence="1">
    <location>
        <position position="309"/>
    </location>
</feature>
<reference key="1">
    <citation type="journal article" date="2005" name="Science">
        <title>The genome of the basidiomycetous yeast and human pathogen Cryptococcus neoformans.</title>
        <authorList>
            <person name="Loftus B.J."/>
            <person name="Fung E."/>
            <person name="Roncaglia P."/>
            <person name="Rowley D."/>
            <person name="Amedeo P."/>
            <person name="Bruno D."/>
            <person name="Vamathevan J."/>
            <person name="Miranda M."/>
            <person name="Anderson I.J."/>
            <person name="Fraser J.A."/>
            <person name="Allen J.E."/>
            <person name="Bosdet I.E."/>
            <person name="Brent M.R."/>
            <person name="Chiu R."/>
            <person name="Doering T.L."/>
            <person name="Donlin M.J."/>
            <person name="D'Souza C.A."/>
            <person name="Fox D.S."/>
            <person name="Grinberg V."/>
            <person name="Fu J."/>
            <person name="Fukushima M."/>
            <person name="Haas B.J."/>
            <person name="Huang J.C."/>
            <person name="Janbon G."/>
            <person name="Jones S.J.M."/>
            <person name="Koo H.L."/>
            <person name="Krzywinski M.I."/>
            <person name="Kwon-Chung K.J."/>
            <person name="Lengeler K.B."/>
            <person name="Maiti R."/>
            <person name="Marra M.A."/>
            <person name="Marra R.E."/>
            <person name="Mathewson C.A."/>
            <person name="Mitchell T.G."/>
            <person name="Pertea M."/>
            <person name="Riggs F.R."/>
            <person name="Salzberg S.L."/>
            <person name="Schein J.E."/>
            <person name="Shvartsbeyn A."/>
            <person name="Shin H."/>
            <person name="Shumway M."/>
            <person name="Specht C.A."/>
            <person name="Suh B.B."/>
            <person name="Tenney A."/>
            <person name="Utterback T.R."/>
            <person name="Wickes B.L."/>
            <person name="Wortman J.R."/>
            <person name="Wye N.H."/>
            <person name="Kronstad J.W."/>
            <person name="Lodge J.K."/>
            <person name="Heitman J."/>
            <person name="Davis R.W."/>
            <person name="Fraser C.M."/>
            <person name="Hyman R.W."/>
        </authorList>
    </citation>
    <scope>NUCLEOTIDE SEQUENCE [LARGE SCALE GENOMIC DNA]</scope>
    <source>
        <strain>B-3501A</strain>
    </source>
</reference>
<keyword id="KW-0053">Apoptosis</keyword>
<keyword id="KW-0378">Hydrolase</keyword>
<keyword id="KW-0645">Protease</keyword>
<keyword id="KW-0788">Thiol protease</keyword>
<keyword id="KW-0865">Zymogen</keyword>
<evidence type="ECO:0000250" key="1"/>
<evidence type="ECO:0000255" key="2"/>
<evidence type="ECO:0000256" key="3">
    <source>
        <dbReference type="SAM" id="MobiDB-lite"/>
    </source>
</evidence>
<evidence type="ECO:0000305" key="4"/>
<dbReference type="EC" id="3.4.22.-"/>
<dbReference type="EMBL" id="AAEY01000050">
    <property type="protein sequence ID" value="EAL18352.1"/>
    <property type="status" value="ALT_SEQ"/>
    <property type="molecule type" value="Genomic_DNA"/>
</dbReference>
<dbReference type="RefSeq" id="XP_772999.1">
    <property type="nucleotide sequence ID" value="XM_767906.1"/>
</dbReference>
<dbReference type="SMR" id="P0CM59"/>
<dbReference type="GeneID" id="4938618"/>
<dbReference type="KEGG" id="cnb:CNBJ2750"/>
<dbReference type="HOGENOM" id="CLU_029389_0_2_1"/>
<dbReference type="OrthoDB" id="8596at5206"/>
<dbReference type="GO" id="GO:0005737">
    <property type="term" value="C:cytoplasm"/>
    <property type="evidence" value="ECO:0007669"/>
    <property type="project" value="TreeGrafter"/>
</dbReference>
<dbReference type="GO" id="GO:0004197">
    <property type="term" value="F:cysteine-type endopeptidase activity"/>
    <property type="evidence" value="ECO:0007669"/>
    <property type="project" value="InterPro"/>
</dbReference>
<dbReference type="GO" id="GO:0006915">
    <property type="term" value="P:apoptotic process"/>
    <property type="evidence" value="ECO:0007669"/>
    <property type="project" value="UniProtKB-KW"/>
</dbReference>
<dbReference type="GO" id="GO:0006508">
    <property type="term" value="P:proteolysis"/>
    <property type="evidence" value="ECO:0007669"/>
    <property type="project" value="UniProtKB-KW"/>
</dbReference>
<dbReference type="Gene3D" id="3.40.50.12660">
    <property type="match status" value="2"/>
</dbReference>
<dbReference type="InterPro" id="IPR029030">
    <property type="entry name" value="Caspase-like_dom_sf"/>
</dbReference>
<dbReference type="InterPro" id="IPR050452">
    <property type="entry name" value="Metacaspase"/>
</dbReference>
<dbReference type="InterPro" id="IPR011600">
    <property type="entry name" value="Pept_C14_caspase"/>
</dbReference>
<dbReference type="PANTHER" id="PTHR48104:SF30">
    <property type="entry name" value="METACASPASE-1"/>
    <property type="match status" value="1"/>
</dbReference>
<dbReference type="PANTHER" id="PTHR48104">
    <property type="entry name" value="METACASPASE-4"/>
    <property type="match status" value="1"/>
</dbReference>
<dbReference type="Pfam" id="PF00656">
    <property type="entry name" value="Peptidase_C14"/>
    <property type="match status" value="1"/>
</dbReference>
<dbReference type="SUPFAM" id="SSF52129">
    <property type="entry name" value="Caspase-like"/>
    <property type="match status" value="1"/>
</dbReference>
<accession>P0CM59</accession>
<accession>Q55KQ8</accession>
<accession>Q5KAR8</accession>
<name>MCA1_CRYNB</name>
<proteinExistence type="inferred from homology"/>
<comment type="function">
    <text evidence="1">Involved in cell death (apoptosis).</text>
</comment>
<comment type="similarity">
    <text evidence="4">Belongs to the peptidase C14B family.</text>
</comment>
<comment type="sequence caution" evidence="4">
    <conflict type="erroneous gene model prediction">
        <sequence resource="EMBL-CDS" id="EAL18352"/>
    </conflict>
</comment>
<gene>
    <name type="primary">MCA1</name>
    <name type="ordered locus">CNBJ2750</name>
</gene>
<protein>
    <recommendedName>
        <fullName>Metacaspase-1</fullName>
        <ecNumber>3.4.22.-</ecNumber>
    </recommendedName>
</protein>
<sequence length="463" mass="50236">MSWNQYPGGGHHQQGGYGYRPPPPQWAQQGPPPPPNMGYRPPPPPQAYYNNPPPPQQYQRPAPQQNGYQQGGYQQQQQSQGNYRTSNGGYVPPTGAPVEASYHHTGAGYTPPSGTPQRTSAPYGAGAPIRPPSQAQHYGPQLQGQGGQSAQPYFQYSQCTGKKKALCIGINYVGSSSALAGCINDAHNVQKFLIERYGYKSEDIVMLTDDARNPRQIPTRANILAAMHWLVQGAQPNDSLFFHYSGHGGQTPDLDGDEDDGYDEVIYPLDFKTAGHIVDDDITDCKGRHNIMVRPLPAGCRLTAIYDSCHSGTALDLPYIYSTEGVIKEPNLLAEAGQGLLSAGMSYLRGDTGGMLQGIMGIGKKVMNQNSGAMEKARQTKTSPADVISWSGCKDSQTSADTQEAGRATGAMSYAFIAALTKYPQQSYVQLLNTIRDELKGKYDQKPQLSASHPMDTNILFIC</sequence>